<feature type="chain" id="PRO_1000011778" description="GTPase Der">
    <location>
        <begin position="1"/>
        <end position="453"/>
    </location>
</feature>
<feature type="domain" description="EngA-type G 1">
    <location>
        <begin position="4"/>
        <end position="169"/>
    </location>
</feature>
<feature type="domain" description="EngA-type G 2">
    <location>
        <begin position="177"/>
        <end position="352"/>
    </location>
</feature>
<feature type="domain" description="KH-like" evidence="1">
    <location>
        <begin position="353"/>
        <end position="438"/>
    </location>
</feature>
<feature type="binding site" evidence="1">
    <location>
        <begin position="10"/>
        <end position="17"/>
    </location>
    <ligand>
        <name>GTP</name>
        <dbReference type="ChEBI" id="CHEBI:37565"/>
        <label>1</label>
    </ligand>
</feature>
<feature type="binding site" evidence="1">
    <location>
        <begin position="57"/>
        <end position="61"/>
    </location>
    <ligand>
        <name>GTP</name>
        <dbReference type="ChEBI" id="CHEBI:37565"/>
        <label>1</label>
    </ligand>
</feature>
<feature type="binding site" evidence="1">
    <location>
        <begin position="120"/>
        <end position="123"/>
    </location>
    <ligand>
        <name>GTP</name>
        <dbReference type="ChEBI" id="CHEBI:37565"/>
        <label>1</label>
    </ligand>
</feature>
<feature type="binding site" evidence="1">
    <location>
        <begin position="183"/>
        <end position="190"/>
    </location>
    <ligand>
        <name>GTP</name>
        <dbReference type="ChEBI" id="CHEBI:37565"/>
        <label>2</label>
    </ligand>
</feature>
<feature type="binding site" evidence="1">
    <location>
        <begin position="230"/>
        <end position="234"/>
    </location>
    <ligand>
        <name>GTP</name>
        <dbReference type="ChEBI" id="CHEBI:37565"/>
        <label>2</label>
    </ligand>
</feature>
<feature type="binding site" evidence="1">
    <location>
        <begin position="295"/>
        <end position="298"/>
    </location>
    <ligand>
        <name>GTP</name>
        <dbReference type="ChEBI" id="CHEBI:37565"/>
        <label>2</label>
    </ligand>
</feature>
<proteinExistence type="inferred from homology"/>
<protein>
    <recommendedName>
        <fullName evidence="1">GTPase Der</fullName>
    </recommendedName>
    <alternativeName>
        <fullName evidence="1">GTP-binding protein EngA</fullName>
    </alternativeName>
</protein>
<gene>
    <name evidence="1" type="primary">der</name>
    <name type="synonym">engA</name>
    <name type="ordered locus">Tery_0333</name>
</gene>
<name>DER_TRIEI</name>
<keyword id="KW-0342">GTP-binding</keyword>
<keyword id="KW-0547">Nucleotide-binding</keyword>
<keyword id="KW-0677">Repeat</keyword>
<keyword id="KW-0690">Ribosome biogenesis</keyword>
<organism>
    <name type="scientific">Trichodesmium erythraeum (strain IMS101)</name>
    <dbReference type="NCBI Taxonomy" id="203124"/>
    <lineage>
        <taxon>Bacteria</taxon>
        <taxon>Bacillati</taxon>
        <taxon>Cyanobacteriota</taxon>
        <taxon>Cyanophyceae</taxon>
        <taxon>Oscillatoriophycideae</taxon>
        <taxon>Oscillatoriales</taxon>
        <taxon>Microcoleaceae</taxon>
        <taxon>Trichodesmium</taxon>
    </lineage>
</organism>
<evidence type="ECO:0000255" key="1">
    <source>
        <dbReference type="HAMAP-Rule" id="MF_00195"/>
    </source>
</evidence>
<comment type="function">
    <text evidence="1">GTPase that plays an essential role in the late steps of ribosome biogenesis.</text>
</comment>
<comment type="subunit">
    <text evidence="1">Associates with the 50S ribosomal subunit.</text>
</comment>
<comment type="similarity">
    <text evidence="1">Belongs to the TRAFAC class TrmE-Era-EngA-EngB-Septin-like GTPase superfamily. EngA (Der) GTPase family.</text>
</comment>
<sequence length="453" mass="51019">MPLPIVAIIGRPNVGKSTIVNRLAESKDAIVHDEPGITRDRTYRNAYWEDREFQVVDTGGLVFDDNTEFLPLIREQAMAALVEASVAIFVVDGQTGLTGGDEEIAQWLRQQTIPILLAVNKCESITEGLTQAAMFWELGLGEPYPISGIHGNGTGELLDDLITYLPTQGEITETNQTKIAIVGRPNVGKSSLLNSFIGEKRAIVSPISGTTRDAIDTVVERNGKTYRLIDTAGIRKKKNVEYGAEFFGINRAFKAIRRAEVVMFVIDALDGVTEQDQKLANRIIEDGRACVIVVNKWDAIEKDNYTIYTYEQEVRSRLYFVEWAEMIFVSALTGKRVEKIINLIDNAANEYQRRVTTSVINEVLEEAISWNSPPTNRQGRQGKIYYGTQVTSKPPTIALFVNDPKRFPENYRRYIQSQFRQHLGFTGTPIRLLWRGKKAREVEQNTVNRATRV</sequence>
<dbReference type="EMBL" id="CP000393">
    <property type="protein sequence ID" value="ABG49807.1"/>
    <property type="molecule type" value="Genomic_DNA"/>
</dbReference>
<dbReference type="RefSeq" id="WP_011610203.1">
    <property type="nucleotide sequence ID" value="NC_008312.1"/>
</dbReference>
<dbReference type="SMR" id="Q119L7"/>
<dbReference type="STRING" id="203124.Tery_0333"/>
<dbReference type="KEGG" id="ter:Tery_0333"/>
<dbReference type="eggNOG" id="COG1160">
    <property type="taxonomic scope" value="Bacteria"/>
</dbReference>
<dbReference type="HOGENOM" id="CLU_016077_6_2_3"/>
<dbReference type="OrthoDB" id="9805918at2"/>
<dbReference type="GO" id="GO:0016887">
    <property type="term" value="F:ATP hydrolysis activity"/>
    <property type="evidence" value="ECO:0007669"/>
    <property type="project" value="InterPro"/>
</dbReference>
<dbReference type="GO" id="GO:0005525">
    <property type="term" value="F:GTP binding"/>
    <property type="evidence" value="ECO:0007669"/>
    <property type="project" value="UniProtKB-UniRule"/>
</dbReference>
<dbReference type="GO" id="GO:0043022">
    <property type="term" value="F:ribosome binding"/>
    <property type="evidence" value="ECO:0007669"/>
    <property type="project" value="TreeGrafter"/>
</dbReference>
<dbReference type="GO" id="GO:0042254">
    <property type="term" value="P:ribosome biogenesis"/>
    <property type="evidence" value="ECO:0007669"/>
    <property type="project" value="UniProtKB-KW"/>
</dbReference>
<dbReference type="CDD" id="cd01894">
    <property type="entry name" value="EngA1"/>
    <property type="match status" value="1"/>
</dbReference>
<dbReference type="CDD" id="cd01895">
    <property type="entry name" value="EngA2"/>
    <property type="match status" value="1"/>
</dbReference>
<dbReference type="FunFam" id="3.30.300.20:FF:000004">
    <property type="entry name" value="GTPase Der"/>
    <property type="match status" value="1"/>
</dbReference>
<dbReference type="FunFam" id="3.40.50.300:FF:000040">
    <property type="entry name" value="GTPase Der"/>
    <property type="match status" value="1"/>
</dbReference>
<dbReference type="FunFam" id="3.40.50.300:FF:001185">
    <property type="entry name" value="GTPase Der"/>
    <property type="match status" value="1"/>
</dbReference>
<dbReference type="Gene3D" id="3.30.300.20">
    <property type="match status" value="1"/>
</dbReference>
<dbReference type="Gene3D" id="3.40.50.300">
    <property type="entry name" value="P-loop containing nucleotide triphosphate hydrolases"/>
    <property type="match status" value="2"/>
</dbReference>
<dbReference type="HAMAP" id="MF_00195">
    <property type="entry name" value="GTPase_Der"/>
    <property type="match status" value="1"/>
</dbReference>
<dbReference type="InterPro" id="IPR003593">
    <property type="entry name" value="AAA+_ATPase"/>
</dbReference>
<dbReference type="InterPro" id="IPR031166">
    <property type="entry name" value="G_ENGA"/>
</dbReference>
<dbReference type="InterPro" id="IPR006073">
    <property type="entry name" value="GTP-bd"/>
</dbReference>
<dbReference type="InterPro" id="IPR016484">
    <property type="entry name" value="GTPase_Der"/>
</dbReference>
<dbReference type="InterPro" id="IPR032859">
    <property type="entry name" value="KH_dom-like"/>
</dbReference>
<dbReference type="InterPro" id="IPR015946">
    <property type="entry name" value="KH_dom-like_a/b"/>
</dbReference>
<dbReference type="InterPro" id="IPR027417">
    <property type="entry name" value="P-loop_NTPase"/>
</dbReference>
<dbReference type="InterPro" id="IPR005225">
    <property type="entry name" value="Small_GTP-bd"/>
</dbReference>
<dbReference type="NCBIfam" id="TIGR03594">
    <property type="entry name" value="GTPase_EngA"/>
    <property type="match status" value="1"/>
</dbReference>
<dbReference type="NCBIfam" id="TIGR00231">
    <property type="entry name" value="small_GTP"/>
    <property type="match status" value="2"/>
</dbReference>
<dbReference type="PANTHER" id="PTHR43834">
    <property type="entry name" value="GTPASE DER"/>
    <property type="match status" value="1"/>
</dbReference>
<dbReference type="PANTHER" id="PTHR43834:SF6">
    <property type="entry name" value="GTPASE DER"/>
    <property type="match status" value="1"/>
</dbReference>
<dbReference type="Pfam" id="PF14714">
    <property type="entry name" value="KH_dom-like"/>
    <property type="match status" value="1"/>
</dbReference>
<dbReference type="Pfam" id="PF01926">
    <property type="entry name" value="MMR_HSR1"/>
    <property type="match status" value="2"/>
</dbReference>
<dbReference type="PIRSF" id="PIRSF006485">
    <property type="entry name" value="GTP-binding_EngA"/>
    <property type="match status" value="1"/>
</dbReference>
<dbReference type="PRINTS" id="PR00326">
    <property type="entry name" value="GTP1OBG"/>
</dbReference>
<dbReference type="SMART" id="SM00382">
    <property type="entry name" value="AAA"/>
    <property type="match status" value="2"/>
</dbReference>
<dbReference type="SUPFAM" id="SSF52540">
    <property type="entry name" value="P-loop containing nucleoside triphosphate hydrolases"/>
    <property type="match status" value="2"/>
</dbReference>
<dbReference type="PROSITE" id="PS51712">
    <property type="entry name" value="G_ENGA"/>
    <property type="match status" value="2"/>
</dbReference>
<accession>Q119L7</accession>
<reference key="1">
    <citation type="journal article" date="2015" name="Proc. Natl. Acad. Sci. U.S.A.">
        <title>Trichodesmium genome maintains abundant, widespread noncoding DNA in situ, despite oligotrophic lifestyle.</title>
        <authorList>
            <person name="Walworth N."/>
            <person name="Pfreundt U."/>
            <person name="Nelson W.C."/>
            <person name="Mincer T."/>
            <person name="Heidelberg J.F."/>
            <person name="Fu F."/>
            <person name="Waterbury J.B."/>
            <person name="Glavina del Rio T."/>
            <person name="Goodwin L."/>
            <person name="Kyrpides N.C."/>
            <person name="Land M.L."/>
            <person name="Woyke T."/>
            <person name="Hutchins D.A."/>
            <person name="Hess W.R."/>
            <person name="Webb E.A."/>
        </authorList>
    </citation>
    <scope>NUCLEOTIDE SEQUENCE [LARGE SCALE GENOMIC DNA]</scope>
    <source>
        <strain>IMS101</strain>
    </source>
</reference>